<keyword id="KW-0150">Chloroplast</keyword>
<keyword id="KW-0934">Plastid</keyword>
<keyword id="KW-0687">Ribonucleoprotein</keyword>
<keyword id="KW-0689">Ribosomal protein</keyword>
<proteinExistence type="inferred from homology"/>
<organism>
    <name type="scientific">Guizotia abyssinica</name>
    <name type="common">Niger</name>
    <name type="synonym">Ramtilla</name>
    <dbReference type="NCBI Taxonomy" id="4230"/>
    <lineage>
        <taxon>Eukaryota</taxon>
        <taxon>Viridiplantae</taxon>
        <taxon>Streptophyta</taxon>
        <taxon>Embryophyta</taxon>
        <taxon>Tracheophyta</taxon>
        <taxon>Spermatophyta</taxon>
        <taxon>Magnoliopsida</taxon>
        <taxon>eudicotyledons</taxon>
        <taxon>Gunneridae</taxon>
        <taxon>Pentapetalae</taxon>
        <taxon>asterids</taxon>
        <taxon>campanulids</taxon>
        <taxon>Asterales</taxon>
        <taxon>Asteraceae</taxon>
        <taxon>Asteroideae</taxon>
        <taxon>Heliantheae alliance</taxon>
        <taxon>Millerieae</taxon>
        <taxon>Guizotia</taxon>
    </lineage>
</organism>
<geneLocation type="chloroplast"/>
<sequence>MLKNSFFSIILKEQEENKENRGSVEFQVVSFTNKIRKLTSHLELHKKDYLSQRGLRKILGKRQRLLAYLSKKNRARYKELIGQLDIRERKTR</sequence>
<protein>
    <recommendedName>
        <fullName evidence="2">Small ribosomal subunit protein uS15c</fullName>
    </recommendedName>
    <alternativeName>
        <fullName>30S ribosomal protein S15, chloroplastic</fullName>
    </alternativeName>
</protein>
<feature type="chain" id="PRO_0000354258" description="Small ribosomal subunit protein uS15c">
    <location>
        <begin position="1"/>
        <end position="92"/>
    </location>
</feature>
<evidence type="ECO:0000250" key="1"/>
<evidence type="ECO:0000305" key="2"/>
<dbReference type="EMBL" id="EU549769">
    <property type="protein sequence ID" value="ACB86574.1"/>
    <property type="molecule type" value="Genomic_DNA"/>
</dbReference>
<dbReference type="RefSeq" id="YP_001837408.1">
    <property type="nucleotide sequence ID" value="NC_010601.1"/>
</dbReference>
<dbReference type="SMR" id="B2LMP1"/>
<dbReference type="GeneID" id="6219166"/>
<dbReference type="GO" id="GO:0009507">
    <property type="term" value="C:chloroplast"/>
    <property type="evidence" value="ECO:0007669"/>
    <property type="project" value="UniProtKB-SubCell"/>
</dbReference>
<dbReference type="GO" id="GO:1990904">
    <property type="term" value="C:ribonucleoprotein complex"/>
    <property type="evidence" value="ECO:0007669"/>
    <property type="project" value="UniProtKB-KW"/>
</dbReference>
<dbReference type="GO" id="GO:0005840">
    <property type="term" value="C:ribosome"/>
    <property type="evidence" value="ECO:0007669"/>
    <property type="project" value="UniProtKB-KW"/>
</dbReference>
<dbReference type="GO" id="GO:0003735">
    <property type="term" value="F:structural constituent of ribosome"/>
    <property type="evidence" value="ECO:0007669"/>
    <property type="project" value="InterPro"/>
</dbReference>
<dbReference type="GO" id="GO:0006412">
    <property type="term" value="P:translation"/>
    <property type="evidence" value="ECO:0007669"/>
    <property type="project" value="UniProtKB-UniRule"/>
</dbReference>
<dbReference type="CDD" id="cd00353">
    <property type="entry name" value="Ribosomal_S15p_S13e"/>
    <property type="match status" value="1"/>
</dbReference>
<dbReference type="Gene3D" id="1.10.287.10">
    <property type="entry name" value="S15/NS1, RNA-binding"/>
    <property type="match status" value="1"/>
</dbReference>
<dbReference type="HAMAP" id="MF_01343_B">
    <property type="entry name" value="Ribosomal_uS15_B"/>
    <property type="match status" value="1"/>
</dbReference>
<dbReference type="InterPro" id="IPR000589">
    <property type="entry name" value="Ribosomal_uS15"/>
</dbReference>
<dbReference type="InterPro" id="IPR005290">
    <property type="entry name" value="Ribosomal_uS15_bac-type"/>
</dbReference>
<dbReference type="InterPro" id="IPR009068">
    <property type="entry name" value="uS15_NS1_RNA-bd_sf"/>
</dbReference>
<dbReference type="NCBIfam" id="TIGR00952">
    <property type="entry name" value="S15_bact"/>
    <property type="match status" value="1"/>
</dbReference>
<dbReference type="PANTHER" id="PTHR23321">
    <property type="entry name" value="RIBOSOMAL PROTEIN S15, BACTERIAL AND ORGANELLAR"/>
    <property type="match status" value="1"/>
</dbReference>
<dbReference type="PANTHER" id="PTHR23321:SF26">
    <property type="entry name" value="SMALL RIBOSOMAL SUBUNIT PROTEIN US15M"/>
    <property type="match status" value="1"/>
</dbReference>
<dbReference type="Pfam" id="PF00312">
    <property type="entry name" value="Ribosomal_S15"/>
    <property type="match status" value="1"/>
</dbReference>
<dbReference type="SMART" id="SM01387">
    <property type="entry name" value="Ribosomal_S15"/>
    <property type="match status" value="1"/>
</dbReference>
<dbReference type="SUPFAM" id="SSF47060">
    <property type="entry name" value="S15/NS1 RNA-binding domain"/>
    <property type="match status" value="1"/>
</dbReference>
<dbReference type="PROSITE" id="PS00362">
    <property type="entry name" value="RIBOSOMAL_S15"/>
    <property type="match status" value="1"/>
</dbReference>
<name>RR15_GUIAB</name>
<comment type="subunit">
    <text evidence="1">Part of the 30S ribosomal subunit.</text>
</comment>
<comment type="subcellular location">
    <subcellularLocation>
        <location>Plastid</location>
        <location>Chloroplast</location>
    </subcellularLocation>
</comment>
<comment type="similarity">
    <text evidence="2">Belongs to the universal ribosomal protein uS15 family.</text>
</comment>
<reference key="1">
    <citation type="submission" date="2008-03" db="EMBL/GenBank/DDBJ databases">
        <title>Guizotia abyssinica chloroplast sequenced using Solexa.</title>
        <authorList>
            <person name="Kane N.C."/>
            <person name="Dempewolf H."/>
            <person name="Stewart M.L."/>
            <person name="Cronk Q."/>
            <person name="Rieseberrg L.H."/>
        </authorList>
    </citation>
    <scope>NUCLEOTIDE SEQUENCE [LARGE SCALE GENOMIC DNA]</scope>
    <source>
        <strain>cv. PI 508077</strain>
    </source>
</reference>
<gene>
    <name type="primary">rps15</name>
    <name type="ordered locus">GuabCp070</name>
</gene>
<accession>B2LMP1</accession>